<gene>
    <name evidence="8 9" type="primary">HIPP18</name>
    <name evidence="7" type="synonym">MEE56</name>
    <name evidence="12" type="ordered locus">At4g13380</name>
    <name evidence="13" type="ORF">T9E8.120</name>
</gene>
<organism>
    <name type="scientific">Arabidopsis thaliana</name>
    <name type="common">Mouse-ear cress</name>
    <dbReference type="NCBI Taxonomy" id="3702"/>
    <lineage>
        <taxon>Eukaryota</taxon>
        <taxon>Viridiplantae</taxon>
        <taxon>Streptophyta</taxon>
        <taxon>Embryophyta</taxon>
        <taxon>Tracheophyta</taxon>
        <taxon>Spermatophyta</taxon>
        <taxon>Magnoliopsida</taxon>
        <taxon>eudicotyledons</taxon>
        <taxon>Gunneridae</taxon>
        <taxon>Pentapetalae</taxon>
        <taxon>rosids</taxon>
        <taxon>malvids</taxon>
        <taxon>Brassicales</taxon>
        <taxon>Brassicaceae</taxon>
        <taxon>Camelineae</taxon>
        <taxon>Arabidopsis</taxon>
    </lineage>
</organism>
<keyword id="KW-0449">Lipoprotein</keyword>
<keyword id="KW-0479">Metal-binding</keyword>
<keyword id="KW-0488">Methylation</keyword>
<keyword id="KW-0636">Prenylation</keyword>
<keyword id="KW-1185">Reference proteome</keyword>
<accession>Q9T0K9</accession>
<sequence>MVTGNFNLEKLLKNLKKKTGKKAEILTMNEKVEKEDVVQNEANEQETVTKKNEEGDIVDKKDETPEVEEKIDKPETSTRKLEIHIAFLSEKYEADIGKVISKFEGVKTCKVDVENKKVVITGDFDEEKLWKELEEKMRKRIVKMEKEKKDDEPITKDEENEIDRGVYMNPSSDDEKEMARWMMFSDENPNACSIS</sequence>
<dbReference type="EMBL" id="AL049608">
    <property type="protein sequence ID" value="CAB40773.1"/>
    <property type="molecule type" value="Genomic_DNA"/>
</dbReference>
<dbReference type="EMBL" id="AL161536">
    <property type="protein sequence ID" value="CAB78380.1"/>
    <property type="molecule type" value="Genomic_DNA"/>
</dbReference>
<dbReference type="EMBL" id="CP002687">
    <property type="protein sequence ID" value="AEE83272.1"/>
    <property type="molecule type" value="Genomic_DNA"/>
</dbReference>
<dbReference type="PIR" id="T06295">
    <property type="entry name" value="T06295"/>
</dbReference>
<dbReference type="RefSeq" id="NP_193074.1">
    <property type="nucleotide sequence ID" value="NM_117412.1"/>
</dbReference>
<dbReference type="SMR" id="Q9T0K9"/>
<dbReference type="FunCoup" id="Q9T0K9">
    <property type="interactions" value="4"/>
</dbReference>
<dbReference type="STRING" id="3702.Q9T0K9"/>
<dbReference type="iPTMnet" id="Q9T0K9"/>
<dbReference type="PaxDb" id="3702-AT4G13380.1"/>
<dbReference type="EnsemblPlants" id="AT4G13380.1">
    <property type="protein sequence ID" value="AT4G13380.1"/>
    <property type="gene ID" value="AT4G13380"/>
</dbReference>
<dbReference type="GeneID" id="826969"/>
<dbReference type="Gramene" id="AT4G13380.1">
    <property type="protein sequence ID" value="AT4G13380.1"/>
    <property type="gene ID" value="AT4G13380"/>
</dbReference>
<dbReference type="KEGG" id="ath:AT4G13380"/>
<dbReference type="Araport" id="AT4G13380"/>
<dbReference type="TAIR" id="AT4G13380">
    <property type="gene designation" value="MEE56"/>
</dbReference>
<dbReference type="eggNOG" id="KOG1603">
    <property type="taxonomic scope" value="Eukaryota"/>
</dbReference>
<dbReference type="HOGENOM" id="CLU_1398104_0_0_1"/>
<dbReference type="InParanoid" id="Q9T0K9"/>
<dbReference type="OMA" id="VEIHIAF"/>
<dbReference type="PhylomeDB" id="Q9T0K9"/>
<dbReference type="PRO" id="PR:Q9T0K9"/>
<dbReference type="Proteomes" id="UP000006548">
    <property type="component" value="Chromosome 4"/>
</dbReference>
<dbReference type="ExpressionAtlas" id="Q9T0K9">
    <property type="expression patterns" value="baseline"/>
</dbReference>
<dbReference type="GO" id="GO:0046872">
    <property type="term" value="F:metal ion binding"/>
    <property type="evidence" value="ECO:0007669"/>
    <property type="project" value="UniProtKB-KW"/>
</dbReference>
<dbReference type="GO" id="GO:0009793">
    <property type="term" value="P:embryo development ending in seed dormancy"/>
    <property type="evidence" value="ECO:0000315"/>
    <property type="project" value="TAIR"/>
</dbReference>
<dbReference type="CDD" id="cd00371">
    <property type="entry name" value="HMA"/>
    <property type="match status" value="1"/>
</dbReference>
<dbReference type="Gene3D" id="3.30.70.100">
    <property type="match status" value="1"/>
</dbReference>
<dbReference type="InterPro" id="IPR044577">
    <property type="entry name" value="HIPP4/7/8/17/18/19"/>
</dbReference>
<dbReference type="InterPro" id="IPR006121">
    <property type="entry name" value="HMA_dom"/>
</dbReference>
<dbReference type="InterPro" id="IPR036163">
    <property type="entry name" value="HMA_dom_sf"/>
</dbReference>
<dbReference type="PANTHER" id="PTHR46195:SF25">
    <property type="entry name" value="HEAVY METAL-ASSOCIATED ISOPRENYLATED PLANT PROTEIN 18"/>
    <property type="match status" value="1"/>
</dbReference>
<dbReference type="PANTHER" id="PTHR46195">
    <property type="entry name" value="HEAVY METAL-ASSOCIATED ISOPRENYLATED PLANT PROTEIN 7"/>
    <property type="match status" value="1"/>
</dbReference>
<dbReference type="Pfam" id="PF00403">
    <property type="entry name" value="HMA"/>
    <property type="match status" value="1"/>
</dbReference>
<dbReference type="SUPFAM" id="SSF55008">
    <property type="entry name" value="HMA, heavy metal-associated domain"/>
    <property type="match status" value="1"/>
</dbReference>
<dbReference type="PROSITE" id="PS50846">
    <property type="entry name" value="HMA_2"/>
    <property type="match status" value="1"/>
</dbReference>
<reference key="1">
    <citation type="journal article" date="1999" name="Nature">
        <title>Sequence and analysis of chromosome 4 of the plant Arabidopsis thaliana.</title>
        <authorList>
            <person name="Mayer K.F.X."/>
            <person name="Schueller C."/>
            <person name="Wambutt R."/>
            <person name="Murphy G."/>
            <person name="Volckaert G."/>
            <person name="Pohl T."/>
            <person name="Duesterhoeft A."/>
            <person name="Stiekema W."/>
            <person name="Entian K.-D."/>
            <person name="Terryn N."/>
            <person name="Harris B."/>
            <person name="Ansorge W."/>
            <person name="Brandt P."/>
            <person name="Grivell L.A."/>
            <person name="Rieger M."/>
            <person name="Weichselgartner M."/>
            <person name="de Simone V."/>
            <person name="Obermaier B."/>
            <person name="Mache R."/>
            <person name="Mueller M."/>
            <person name="Kreis M."/>
            <person name="Delseny M."/>
            <person name="Puigdomenech P."/>
            <person name="Watson M."/>
            <person name="Schmidtheini T."/>
            <person name="Reichert B."/>
            <person name="Portetelle D."/>
            <person name="Perez-Alonso M."/>
            <person name="Boutry M."/>
            <person name="Bancroft I."/>
            <person name="Vos P."/>
            <person name="Hoheisel J."/>
            <person name="Zimmermann W."/>
            <person name="Wedler H."/>
            <person name="Ridley P."/>
            <person name="Langham S.-A."/>
            <person name="McCullagh B."/>
            <person name="Bilham L."/>
            <person name="Robben J."/>
            <person name="van der Schueren J."/>
            <person name="Grymonprez B."/>
            <person name="Chuang Y.-J."/>
            <person name="Vandenbussche F."/>
            <person name="Braeken M."/>
            <person name="Weltjens I."/>
            <person name="Voet M."/>
            <person name="Bastiaens I."/>
            <person name="Aert R."/>
            <person name="Defoor E."/>
            <person name="Weitzenegger T."/>
            <person name="Bothe G."/>
            <person name="Ramsperger U."/>
            <person name="Hilbert H."/>
            <person name="Braun M."/>
            <person name="Holzer E."/>
            <person name="Brandt A."/>
            <person name="Peters S."/>
            <person name="van Staveren M."/>
            <person name="Dirkse W."/>
            <person name="Mooijman P."/>
            <person name="Klein Lankhorst R."/>
            <person name="Rose M."/>
            <person name="Hauf J."/>
            <person name="Koetter P."/>
            <person name="Berneiser S."/>
            <person name="Hempel S."/>
            <person name="Feldpausch M."/>
            <person name="Lamberth S."/>
            <person name="Van den Daele H."/>
            <person name="De Keyser A."/>
            <person name="Buysshaert C."/>
            <person name="Gielen J."/>
            <person name="Villarroel R."/>
            <person name="De Clercq R."/>
            <person name="van Montagu M."/>
            <person name="Rogers J."/>
            <person name="Cronin A."/>
            <person name="Quail M.A."/>
            <person name="Bray-Allen S."/>
            <person name="Clark L."/>
            <person name="Doggett J."/>
            <person name="Hall S."/>
            <person name="Kay M."/>
            <person name="Lennard N."/>
            <person name="McLay K."/>
            <person name="Mayes R."/>
            <person name="Pettett A."/>
            <person name="Rajandream M.A."/>
            <person name="Lyne M."/>
            <person name="Benes V."/>
            <person name="Rechmann S."/>
            <person name="Borkova D."/>
            <person name="Bloecker H."/>
            <person name="Scharfe M."/>
            <person name="Grimm M."/>
            <person name="Loehnert T.-H."/>
            <person name="Dose S."/>
            <person name="de Haan M."/>
            <person name="Maarse A.C."/>
            <person name="Schaefer M."/>
            <person name="Mueller-Auer S."/>
            <person name="Gabel C."/>
            <person name="Fuchs M."/>
            <person name="Fartmann B."/>
            <person name="Granderath K."/>
            <person name="Dauner D."/>
            <person name="Herzl A."/>
            <person name="Neumann S."/>
            <person name="Argiriou A."/>
            <person name="Vitale D."/>
            <person name="Liguori R."/>
            <person name="Piravandi E."/>
            <person name="Massenet O."/>
            <person name="Quigley F."/>
            <person name="Clabauld G."/>
            <person name="Muendlein A."/>
            <person name="Felber R."/>
            <person name="Schnabl S."/>
            <person name="Hiller R."/>
            <person name="Schmidt W."/>
            <person name="Lecharny A."/>
            <person name="Aubourg S."/>
            <person name="Chefdor F."/>
            <person name="Cooke R."/>
            <person name="Berger C."/>
            <person name="Monfort A."/>
            <person name="Casacuberta E."/>
            <person name="Gibbons T."/>
            <person name="Weber N."/>
            <person name="Vandenbol M."/>
            <person name="Bargues M."/>
            <person name="Terol J."/>
            <person name="Torres A."/>
            <person name="Perez-Perez A."/>
            <person name="Purnelle B."/>
            <person name="Bent E."/>
            <person name="Johnson S."/>
            <person name="Tacon D."/>
            <person name="Jesse T."/>
            <person name="Heijnen L."/>
            <person name="Schwarz S."/>
            <person name="Scholler P."/>
            <person name="Heber S."/>
            <person name="Francs P."/>
            <person name="Bielke C."/>
            <person name="Frishman D."/>
            <person name="Haase D."/>
            <person name="Lemcke K."/>
            <person name="Mewes H.-W."/>
            <person name="Stocker S."/>
            <person name="Zaccaria P."/>
            <person name="Bevan M."/>
            <person name="Wilson R.K."/>
            <person name="de la Bastide M."/>
            <person name="Habermann K."/>
            <person name="Parnell L."/>
            <person name="Dedhia N."/>
            <person name="Gnoj L."/>
            <person name="Schutz K."/>
            <person name="Huang E."/>
            <person name="Spiegel L."/>
            <person name="Sekhon M."/>
            <person name="Murray J."/>
            <person name="Sheet P."/>
            <person name="Cordes M."/>
            <person name="Abu-Threideh J."/>
            <person name="Stoneking T."/>
            <person name="Kalicki J."/>
            <person name="Graves T."/>
            <person name="Harmon G."/>
            <person name="Edwards J."/>
            <person name="Latreille P."/>
            <person name="Courtney L."/>
            <person name="Cloud J."/>
            <person name="Abbott A."/>
            <person name="Scott K."/>
            <person name="Johnson D."/>
            <person name="Minx P."/>
            <person name="Bentley D."/>
            <person name="Fulton B."/>
            <person name="Miller N."/>
            <person name="Greco T."/>
            <person name="Kemp K."/>
            <person name="Kramer J."/>
            <person name="Fulton L."/>
            <person name="Mardis E."/>
            <person name="Dante M."/>
            <person name="Pepin K."/>
            <person name="Hillier L.W."/>
            <person name="Nelson J."/>
            <person name="Spieth J."/>
            <person name="Ryan E."/>
            <person name="Andrews S."/>
            <person name="Geisel C."/>
            <person name="Layman D."/>
            <person name="Du H."/>
            <person name="Ali J."/>
            <person name="Berghoff A."/>
            <person name="Jones K."/>
            <person name="Drone K."/>
            <person name="Cotton M."/>
            <person name="Joshu C."/>
            <person name="Antonoiu B."/>
            <person name="Zidanic M."/>
            <person name="Strong C."/>
            <person name="Sun H."/>
            <person name="Lamar B."/>
            <person name="Yordan C."/>
            <person name="Ma P."/>
            <person name="Zhong J."/>
            <person name="Preston R."/>
            <person name="Vil D."/>
            <person name="Shekher M."/>
            <person name="Matero A."/>
            <person name="Shah R."/>
            <person name="Swaby I.K."/>
            <person name="O'Shaughnessy A."/>
            <person name="Rodriguez M."/>
            <person name="Hoffman J."/>
            <person name="Till S."/>
            <person name="Granat S."/>
            <person name="Shohdy N."/>
            <person name="Hasegawa A."/>
            <person name="Hameed A."/>
            <person name="Lodhi M."/>
            <person name="Johnson A."/>
            <person name="Chen E."/>
            <person name="Marra M.A."/>
            <person name="Martienssen R."/>
            <person name="McCombie W.R."/>
        </authorList>
    </citation>
    <scope>NUCLEOTIDE SEQUENCE [LARGE SCALE GENOMIC DNA]</scope>
    <source>
        <strain>cv. Columbia</strain>
    </source>
</reference>
<reference key="2">
    <citation type="journal article" date="2017" name="Plant J.">
        <title>Araport11: a complete reannotation of the Arabidopsis thaliana reference genome.</title>
        <authorList>
            <person name="Cheng C.Y."/>
            <person name="Krishnakumar V."/>
            <person name="Chan A.P."/>
            <person name="Thibaud-Nissen F."/>
            <person name="Schobel S."/>
            <person name="Town C.D."/>
        </authorList>
    </citation>
    <scope>GENOME REANNOTATION</scope>
    <source>
        <strain>cv. Columbia</strain>
    </source>
</reference>
<reference key="3">
    <citation type="journal article" date="2005" name="Development">
        <title>Genetic and molecular identification of genes required for female gametophyte development and function in Arabidopsis.</title>
        <authorList>
            <person name="Pagnussat G.C."/>
            <person name="Yu H.-J."/>
            <person name="Ngo Q.A."/>
            <person name="Rajani S."/>
            <person name="Mayalagu S."/>
            <person name="Johnson C.S."/>
            <person name="Capron A."/>
            <person name="Xie L.-F."/>
            <person name="Ye D."/>
            <person name="Sundaresan V."/>
        </authorList>
    </citation>
    <scope>FUNCTION</scope>
    <scope>NOMENCLATURE</scope>
</reference>
<reference key="4">
    <citation type="journal article" date="2008" name="Plant Physiol.">
        <title>Transcriptome analysis of proliferating Arabidopsis endosperm reveals biological implications for the control of syncytial division, cytokinin signaling, and gene expression regulation.</title>
        <authorList>
            <person name="Day R.C."/>
            <person name="Herridge R.P."/>
            <person name="Ambrose B.A."/>
            <person name="Macknight R.C."/>
        </authorList>
    </citation>
    <scope>DEVELOPMENTAL STAGE</scope>
</reference>
<reference key="5">
    <citation type="journal article" date="2010" name="Metallomics">
        <title>Metallochaperone-like genes in Arabidopsis thaliana.</title>
        <authorList>
            <person name="Tehseen M."/>
            <person name="Cairns N."/>
            <person name="Sherson S."/>
            <person name="Cobbett C.S."/>
        </authorList>
    </citation>
    <scope>GENE FAMILY</scope>
    <scope>NOMENCLATURE</scope>
</reference>
<reference key="6">
    <citation type="journal article" date="2013" name="FEBS J.">
        <title>Heavy metal-associated isoprenylated plant protein (HIPP): characterization of a family of proteins exclusive to plants.</title>
        <authorList>
            <person name="de Abreu-Neto J.B."/>
            <person name="Turchetto-Zolet A.C."/>
            <person name="de Oliveira L.F."/>
            <person name="Zanettini M.H."/>
            <person name="Margis-Pinheiro M."/>
        </authorList>
    </citation>
    <scope>GENE FAMILY</scope>
    <scope>NOMENCLATURE</scope>
</reference>
<protein>
    <recommendedName>
        <fullName evidence="8 9">Heavy metal-associated isoprenylated plant protein 18</fullName>
        <shortName evidence="8 9">AtHIP18</shortName>
    </recommendedName>
    <alternativeName>
        <fullName evidence="7">Protein maternal effect embryo arrest 56</fullName>
    </alternativeName>
</protein>
<proteinExistence type="evidence at transcript level"/>
<comment type="function">
    <text evidence="1 5">Probable heavy-metal-binding protein (By similarity). Required for female gametophyte development and function (PubMed:15634699).</text>
</comment>
<comment type="developmental stage">
    <text evidence="6">Expressed very early during embryo and endosperm formation and during the proliferative stage of endosperm development at 4 days after pollination.</text>
</comment>
<comment type="similarity">
    <text evidence="10">Belongs to the HIPP family.</text>
</comment>
<comment type="caution">
    <text evidence="11">The HMA domain lacks the core conserved Cys-X-X-Cys motif.</text>
</comment>
<evidence type="ECO:0000250" key="1">
    <source>
        <dbReference type="UniProtKB" id="Q9LZF1"/>
    </source>
</evidence>
<evidence type="ECO:0000250" key="2">
    <source>
        <dbReference type="UniProtKB" id="Q9SZN7"/>
    </source>
</evidence>
<evidence type="ECO:0000255" key="3">
    <source>
        <dbReference type="PROSITE-ProRule" id="PRU00280"/>
    </source>
</evidence>
<evidence type="ECO:0000256" key="4">
    <source>
        <dbReference type="SAM" id="MobiDB-lite"/>
    </source>
</evidence>
<evidence type="ECO:0000269" key="5">
    <source>
    </source>
</evidence>
<evidence type="ECO:0000269" key="6">
    <source>
    </source>
</evidence>
<evidence type="ECO:0000303" key="7">
    <source>
    </source>
</evidence>
<evidence type="ECO:0000303" key="8">
    <source>
    </source>
</evidence>
<evidence type="ECO:0000303" key="9">
    <source>
    </source>
</evidence>
<evidence type="ECO:0000305" key="10"/>
<evidence type="ECO:0000305" key="11">
    <source>
    </source>
</evidence>
<evidence type="ECO:0000312" key="12">
    <source>
        <dbReference type="Araport" id="AT4G13380"/>
    </source>
</evidence>
<evidence type="ECO:0000312" key="13">
    <source>
        <dbReference type="EMBL" id="CAB40773.1"/>
    </source>
</evidence>
<name>HIP18_ARATH</name>
<feature type="chain" id="PRO_0000437825" description="Heavy metal-associated isoprenylated plant protein 18">
    <location>
        <begin position="1"/>
        <end position="192"/>
    </location>
</feature>
<feature type="propeptide" id="PRO_0000437826" description="Removed in mature form" evidence="10">
    <location>
        <begin position="193"/>
        <end position="195"/>
    </location>
</feature>
<feature type="domain" description="HMA" evidence="3">
    <location>
        <begin position="78"/>
        <end position="149"/>
    </location>
</feature>
<feature type="region of interest" description="Disordered" evidence="4">
    <location>
        <begin position="36"/>
        <end position="76"/>
    </location>
</feature>
<feature type="region of interest" description="Disordered" evidence="4">
    <location>
        <begin position="145"/>
        <end position="172"/>
    </location>
</feature>
<feature type="compositionally biased region" description="Basic and acidic residues" evidence="4">
    <location>
        <begin position="47"/>
        <end position="76"/>
    </location>
</feature>
<feature type="compositionally biased region" description="Basic and acidic residues" evidence="4">
    <location>
        <begin position="145"/>
        <end position="157"/>
    </location>
</feature>
<feature type="modified residue" description="Cysteine methyl ester" evidence="2">
    <location>
        <position position="192"/>
    </location>
</feature>
<feature type="lipid moiety-binding region" description="S-farnesyl cysteine" evidence="2">
    <location>
        <position position="192"/>
    </location>
</feature>